<dbReference type="EMBL" id="M33330">
    <property type="protein sequence ID" value="AAA40055.1"/>
    <property type="molecule type" value="mRNA"/>
</dbReference>
<dbReference type="EMBL" id="BC010763">
    <property type="protein sequence ID" value="AAH10763.1"/>
    <property type="molecule type" value="mRNA"/>
</dbReference>
<dbReference type="EMBL" id="BC094409">
    <property type="protein sequence ID" value="AAH94409.1"/>
    <property type="molecule type" value="mRNA"/>
</dbReference>
<dbReference type="CCDS" id="CCDS35978.1"/>
<dbReference type="PIR" id="A34823">
    <property type="entry name" value="A34823"/>
</dbReference>
<dbReference type="RefSeq" id="NP_033117.1">
    <property type="nucleotide sequence ID" value="NM_009091.2"/>
</dbReference>
<dbReference type="PDB" id="7CPU">
    <property type="method" value="EM"/>
    <property type="resolution" value="2.82 A"/>
    <property type="chains" value="SP=1-145"/>
</dbReference>
<dbReference type="PDB" id="7CPV">
    <property type="method" value="EM"/>
    <property type="resolution" value="3.03 A"/>
    <property type="chains" value="SP=1-145"/>
</dbReference>
<dbReference type="PDB" id="7LS1">
    <property type="method" value="EM"/>
    <property type="resolution" value="3.30 A"/>
    <property type="chains" value="x2=1-145"/>
</dbReference>
<dbReference type="PDB" id="7LS2">
    <property type="method" value="EM"/>
    <property type="resolution" value="3.10 A"/>
    <property type="chains" value="x2=1-145"/>
</dbReference>
<dbReference type="PDBsum" id="7CPU"/>
<dbReference type="PDBsum" id="7CPV"/>
<dbReference type="PDBsum" id="7LS1"/>
<dbReference type="PDBsum" id="7LS2"/>
<dbReference type="EMDB" id="EMD-23500"/>
<dbReference type="EMDB" id="EMD-23501"/>
<dbReference type="EMDB" id="EMD-30432"/>
<dbReference type="EMDB" id="EMD-30433"/>
<dbReference type="SMR" id="P62843"/>
<dbReference type="BioGRID" id="203003">
    <property type="interactions" value="67"/>
</dbReference>
<dbReference type="ComplexPortal" id="CPX-5261">
    <property type="entry name" value="40S cytosolic small ribosomal subunit"/>
</dbReference>
<dbReference type="FunCoup" id="P62843">
    <property type="interactions" value="2477"/>
</dbReference>
<dbReference type="IntAct" id="P62843">
    <property type="interactions" value="5"/>
</dbReference>
<dbReference type="MINT" id="P62843"/>
<dbReference type="STRING" id="10090.ENSMUSP00000069004"/>
<dbReference type="GlyGen" id="P62843">
    <property type="glycosylation" value="1 site, 1 O-linked glycan (1 site)"/>
</dbReference>
<dbReference type="iPTMnet" id="P62843"/>
<dbReference type="PhosphoSitePlus" id="P62843"/>
<dbReference type="jPOST" id="P62843"/>
<dbReference type="PaxDb" id="10090-ENSMUSP00000069004"/>
<dbReference type="PeptideAtlas" id="P62843"/>
<dbReference type="ProteomicsDB" id="299937"/>
<dbReference type="Pumba" id="P62843"/>
<dbReference type="TopDownProteomics" id="P62843"/>
<dbReference type="Antibodypedia" id="22700">
    <property type="antibodies" value="217 antibodies from 28 providers"/>
</dbReference>
<dbReference type="DNASU" id="20054"/>
<dbReference type="Ensembl" id="ENSMUST00000068408.14">
    <property type="protein sequence ID" value="ENSMUSP00000069004.8"/>
    <property type="gene ID" value="ENSMUSG00000063457.15"/>
</dbReference>
<dbReference type="GeneID" id="20054"/>
<dbReference type="KEGG" id="mmu:20054"/>
<dbReference type="UCSC" id="uc007gcn.2">
    <property type="organism name" value="mouse"/>
</dbReference>
<dbReference type="AGR" id="MGI:98117"/>
<dbReference type="CTD" id="6209"/>
<dbReference type="MGI" id="MGI:98117">
    <property type="gene designation" value="Rps15"/>
</dbReference>
<dbReference type="VEuPathDB" id="HostDB:ENSMUSG00000063457"/>
<dbReference type="eggNOG" id="KOG0898">
    <property type="taxonomic scope" value="Eukaryota"/>
</dbReference>
<dbReference type="GeneTree" id="ENSGT00390000000475"/>
<dbReference type="InParanoid" id="P62843"/>
<dbReference type="OMA" id="KTHCRDM"/>
<dbReference type="OrthoDB" id="10258210at2759"/>
<dbReference type="PhylomeDB" id="P62843"/>
<dbReference type="TreeFam" id="TF318650"/>
<dbReference type="Reactome" id="R-MMU-156827">
    <property type="pathway name" value="L13a-mediated translational silencing of Ceruloplasmin expression"/>
</dbReference>
<dbReference type="Reactome" id="R-MMU-1799339">
    <property type="pathway name" value="SRP-dependent cotranslational protein targeting to membrane"/>
</dbReference>
<dbReference type="Reactome" id="R-MMU-6791226">
    <property type="pathway name" value="Major pathway of rRNA processing in the nucleolus and cytosol"/>
</dbReference>
<dbReference type="Reactome" id="R-MMU-72649">
    <property type="pathway name" value="Translation initiation complex formation"/>
</dbReference>
<dbReference type="Reactome" id="R-MMU-72689">
    <property type="pathway name" value="Formation of a pool of free 40S subunits"/>
</dbReference>
<dbReference type="Reactome" id="R-MMU-72695">
    <property type="pathway name" value="Formation of the ternary complex, and subsequently, the 43S complex"/>
</dbReference>
<dbReference type="Reactome" id="R-MMU-72702">
    <property type="pathway name" value="Ribosomal scanning and start codon recognition"/>
</dbReference>
<dbReference type="Reactome" id="R-MMU-72706">
    <property type="pathway name" value="GTP hydrolysis and joining of the 60S ribosomal subunit"/>
</dbReference>
<dbReference type="Reactome" id="R-MMU-975956">
    <property type="pathway name" value="Nonsense Mediated Decay (NMD) independent of the Exon Junction Complex (EJC)"/>
</dbReference>
<dbReference type="Reactome" id="R-MMU-975957">
    <property type="pathway name" value="Nonsense Mediated Decay (NMD) enhanced by the Exon Junction Complex (EJC)"/>
</dbReference>
<dbReference type="BioGRID-ORCS" id="20054">
    <property type="hits" value="27 hits in 55 CRISPR screens"/>
</dbReference>
<dbReference type="CD-CODE" id="CE726F99">
    <property type="entry name" value="Postsynaptic density"/>
</dbReference>
<dbReference type="ChiTaRS" id="Rps15">
    <property type="organism name" value="mouse"/>
</dbReference>
<dbReference type="PRO" id="PR:P62843"/>
<dbReference type="Proteomes" id="UP000000589">
    <property type="component" value="Chromosome 10"/>
</dbReference>
<dbReference type="RNAct" id="P62843">
    <property type="molecule type" value="protein"/>
</dbReference>
<dbReference type="Bgee" id="ENSMUSG00000063457">
    <property type="expression patterns" value="Expressed in mammary bud and 246 other cell types or tissues"/>
</dbReference>
<dbReference type="ExpressionAtlas" id="P62843">
    <property type="expression patterns" value="baseline and differential"/>
</dbReference>
<dbReference type="GO" id="GO:0005737">
    <property type="term" value="C:cytoplasm"/>
    <property type="evidence" value="ECO:0000303"/>
    <property type="project" value="ComplexPortal"/>
</dbReference>
<dbReference type="GO" id="GO:0005829">
    <property type="term" value="C:cytosol"/>
    <property type="evidence" value="ECO:0000304"/>
    <property type="project" value="Reactome"/>
</dbReference>
<dbReference type="GO" id="GO:0022627">
    <property type="term" value="C:cytosolic small ribosomal subunit"/>
    <property type="evidence" value="ECO:0000314"/>
    <property type="project" value="UniProtKB"/>
</dbReference>
<dbReference type="GO" id="GO:0005654">
    <property type="term" value="C:nucleoplasm"/>
    <property type="evidence" value="ECO:0007669"/>
    <property type="project" value="Ensembl"/>
</dbReference>
<dbReference type="GO" id="GO:0045202">
    <property type="term" value="C:synapse"/>
    <property type="evidence" value="ECO:0007669"/>
    <property type="project" value="Ensembl"/>
</dbReference>
<dbReference type="GO" id="GO:0097371">
    <property type="term" value="F:MDM2/MDM4 family protein binding"/>
    <property type="evidence" value="ECO:0007669"/>
    <property type="project" value="Ensembl"/>
</dbReference>
<dbReference type="GO" id="GO:0003723">
    <property type="term" value="F:RNA binding"/>
    <property type="evidence" value="ECO:0007669"/>
    <property type="project" value="InterPro"/>
</dbReference>
<dbReference type="GO" id="GO:0003735">
    <property type="term" value="F:structural constituent of ribosome"/>
    <property type="evidence" value="ECO:0000314"/>
    <property type="project" value="UniProtKB"/>
</dbReference>
<dbReference type="GO" id="GO:1990948">
    <property type="term" value="F:ubiquitin ligase inhibitor activity"/>
    <property type="evidence" value="ECO:0007669"/>
    <property type="project" value="Ensembl"/>
</dbReference>
<dbReference type="GO" id="GO:0002181">
    <property type="term" value="P:cytoplasmic translation"/>
    <property type="evidence" value="ECO:0000303"/>
    <property type="project" value="ComplexPortal"/>
</dbReference>
<dbReference type="GO" id="GO:0097421">
    <property type="term" value="P:liver regeneration"/>
    <property type="evidence" value="ECO:0007669"/>
    <property type="project" value="Ensembl"/>
</dbReference>
<dbReference type="GO" id="GO:1901798">
    <property type="term" value="P:positive regulation of signal transduction by p53 class mediator"/>
    <property type="evidence" value="ECO:0007669"/>
    <property type="project" value="Ensembl"/>
</dbReference>
<dbReference type="GO" id="GO:0000028">
    <property type="term" value="P:ribosomal small subunit assembly"/>
    <property type="evidence" value="ECO:0007669"/>
    <property type="project" value="Ensembl"/>
</dbReference>
<dbReference type="GO" id="GO:0000056">
    <property type="term" value="P:ribosomal small subunit export from nucleus"/>
    <property type="evidence" value="ECO:0007669"/>
    <property type="project" value="Ensembl"/>
</dbReference>
<dbReference type="GO" id="GO:0006364">
    <property type="term" value="P:rRNA processing"/>
    <property type="evidence" value="ECO:0007669"/>
    <property type="project" value="Ensembl"/>
</dbReference>
<dbReference type="FunFam" id="3.30.860.10:FF:000002">
    <property type="entry name" value="40S ribosomal protein S15"/>
    <property type="match status" value="1"/>
</dbReference>
<dbReference type="Gene3D" id="3.30.860.10">
    <property type="entry name" value="30s Ribosomal Protein S19, Chain A"/>
    <property type="match status" value="1"/>
</dbReference>
<dbReference type="HAMAP" id="MF_00531">
    <property type="entry name" value="Ribosomal_uS19"/>
    <property type="match status" value="1"/>
</dbReference>
<dbReference type="InterPro" id="IPR002222">
    <property type="entry name" value="Ribosomal_uS19"/>
</dbReference>
<dbReference type="InterPro" id="IPR020934">
    <property type="entry name" value="Ribosomal_uS19_CS"/>
</dbReference>
<dbReference type="InterPro" id="IPR005713">
    <property type="entry name" value="Ribosomal_uS19_euk/arc"/>
</dbReference>
<dbReference type="InterPro" id="IPR023575">
    <property type="entry name" value="Ribosomal_uS19_SF"/>
</dbReference>
<dbReference type="NCBIfam" id="NF003121">
    <property type="entry name" value="PRK04038.1"/>
    <property type="match status" value="1"/>
</dbReference>
<dbReference type="NCBIfam" id="TIGR01025">
    <property type="entry name" value="uS19_arch"/>
    <property type="match status" value="1"/>
</dbReference>
<dbReference type="PANTHER" id="PTHR11880">
    <property type="entry name" value="RIBOSOMAL PROTEIN S19P FAMILY MEMBER"/>
    <property type="match status" value="1"/>
</dbReference>
<dbReference type="PANTHER" id="PTHR11880:SF2">
    <property type="entry name" value="SMALL RIBOSOMAL SUBUNIT PROTEIN US19"/>
    <property type="match status" value="1"/>
</dbReference>
<dbReference type="Pfam" id="PF00203">
    <property type="entry name" value="Ribosomal_S19"/>
    <property type="match status" value="1"/>
</dbReference>
<dbReference type="PIRSF" id="PIRSF002144">
    <property type="entry name" value="Ribosomal_S19"/>
    <property type="match status" value="1"/>
</dbReference>
<dbReference type="PRINTS" id="PR00975">
    <property type="entry name" value="RIBOSOMALS19"/>
</dbReference>
<dbReference type="SUPFAM" id="SSF54570">
    <property type="entry name" value="Ribosomal protein S19"/>
    <property type="match status" value="1"/>
</dbReference>
<dbReference type="PROSITE" id="PS00323">
    <property type="entry name" value="RIBOSOMAL_S19"/>
    <property type="match status" value="1"/>
</dbReference>
<organism>
    <name type="scientific">Mus musculus</name>
    <name type="common">Mouse</name>
    <dbReference type="NCBI Taxonomy" id="10090"/>
    <lineage>
        <taxon>Eukaryota</taxon>
        <taxon>Metazoa</taxon>
        <taxon>Chordata</taxon>
        <taxon>Craniata</taxon>
        <taxon>Vertebrata</taxon>
        <taxon>Euteleostomi</taxon>
        <taxon>Mammalia</taxon>
        <taxon>Eutheria</taxon>
        <taxon>Euarchontoglires</taxon>
        <taxon>Glires</taxon>
        <taxon>Rodentia</taxon>
        <taxon>Myomorpha</taxon>
        <taxon>Muroidea</taxon>
        <taxon>Muridae</taxon>
        <taxon>Murinae</taxon>
        <taxon>Mus</taxon>
        <taxon>Mus</taxon>
    </lineage>
</organism>
<gene>
    <name type="primary">Rps15</name>
    <name type="synonym">Rig</name>
</gene>
<protein>
    <recommendedName>
        <fullName evidence="3">Small ribosomal subunit protein uS19</fullName>
    </recommendedName>
    <alternativeName>
        <fullName>40S ribosomal protein S15</fullName>
    </alternativeName>
    <alternativeName>
        <fullName>RIG protein</fullName>
    </alternativeName>
</protein>
<accession>P62843</accession>
<accession>P11174</accession>
<accession>Q52KC9</accession>
<reference key="1">
    <citation type="journal article" date="1990" name="Biochem. Biophys. Res. Commun.">
        <title>Nucleotide sequence determination of mouse, chicken and Xenopus laevis rig cDNAs: the rig-encoded protein is extremely conserved during vertebrate evolution.</title>
        <authorList>
            <person name="Sugawara A."/>
            <person name="Nata K."/>
            <person name="Inoue C."/>
            <person name="Takasawa S."/>
            <person name="Yamamoto H."/>
            <person name="Okamoto H."/>
        </authorList>
    </citation>
    <scope>NUCLEOTIDE SEQUENCE [MRNA]</scope>
</reference>
<reference key="2">
    <citation type="journal article" date="2004" name="Genome Res.">
        <title>The status, quality, and expansion of the NIH full-length cDNA project: the Mammalian Gene Collection (MGC).</title>
        <authorList>
            <consortium name="The MGC Project Team"/>
        </authorList>
    </citation>
    <scope>NUCLEOTIDE SEQUENCE [LARGE SCALE MRNA]</scope>
    <source>
        <strain>C57BL/6J</strain>
        <strain>FVB/N</strain>
        <tissue>Kidney</tissue>
        <tissue>Mammary gland</tissue>
    </source>
</reference>
<reference key="3">
    <citation type="journal article" date="2010" name="Cell">
        <title>A tissue-specific atlas of mouse protein phosphorylation and expression.</title>
        <authorList>
            <person name="Huttlin E.L."/>
            <person name="Jedrychowski M.P."/>
            <person name="Elias J.E."/>
            <person name="Goswami T."/>
            <person name="Rad R."/>
            <person name="Beausoleil S.A."/>
            <person name="Villen J."/>
            <person name="Haas W."/>
            <person name="Sowa M.E."/>
            <person name="Gygi S.P."/>
        </authorList>
    </citation>
    <scope>IDENTIFICATION BY MASS SPECTROMETRY [LARGE SCALE ANALYSIS]</scope>
    <source>
        <tissue>Brain</tissue>
        <tissue>Brown adipose tissue</tissue>
        <tissue>Heart</tissue>
        <tissue>Kidney</tissue>
        <tissue>Liver</tissue>
        <tissue>Lung</tissue>
        <tissue>Pancreas</tissue>
        <tissue>Spleen</tissue>
        <tissue>Testis</tissue>
    </source>
</reference>
<reference evidence="4 5" key="4">
    <citation type="journal article" date="2022" name="Nature">
        <title>A male germ-cell-specific ribosome controls male fertility.</title>
        <authorList>
            <person name="Li H."/>
            <person name="Huo Y."/>
            <person name="He X."/>
            <person name="Yao L."/>
            <person name="Zhang H."/>
            <person name="Cui Y."/>
            <person name="Xiao H."/>
            <person name="Xie W."/>
            <person name="Zhang D."/>
            <person name="Wang Y."/>
            <person name="Zhang S."/>
            <person name="Tu H."/>
            <person name="Cheng Y."/>
            <person name="Guo Y."/>
            <person name="Cao X."/>
            <person name="Zhu Y."/>
            <person name="Jiang T."/>
            <person name="Guo X."/>
            <person name="Qin Y."/>
            <person name="Sha J."/>
        </authorList>
    </citation>
    <scope>STRUCTURE BY ELECTRON MICROSCOPY (3.03 ANGSTROMS) OF RIBOSOME</scope>
    <scope>FUNCTION</scope>
    <scope>SUBUNIT</scope>
    <scope>SUBCELLULAR LOCATION</scope>
</reference>
<feature type="initiator methionine" description="Removed" evidence="1">
    <location>
        <position position="1"/>
    </location>
</feature>
<feature type="chain" id="PRO_0000130029" description="Small ribosomal subunit protein uS19">
    <location>
        <begin position="2"/>
        <end position="145"/>
    </location>
</feature>
<feature type="modified residue" description="N-acetylalanine" evidence="1">
    <location>
        <position position="2"/>
    </location>
</feature>
<feature type="cross-link" description="Glycyl lysine isopeptide (Lys-Gly) (interchain with G-Cter in SUMO2)" evidence="1">
    <location>
        <position position="108"/>
    </location>
</feature>
<evidence type="ECO:0000250" key="1">
    <source>
        <dbReference type="UniProtKB" id="P62841"/>
    </source>
</evidence>
<evidence type="ECO:0000269" key="2">
    <source>
    </source>
</evidence>
<evidence type="ECO:0000305" key="3"/>
<evidence type="ECO:0007744" key="4">
    <source>
        <dbReference type="PDB" id="7CPU"/>
    </source>
</evidence>
<evidence type="ECO:0007744" key="5">
    <source>
        <dbReference type="PDB" id="7CPV"/>
    </source>
</evidence>
<sequence>MAEVEQKKKRTFRKFTYRGVDLDQLLDMSYEQLMQLYSARQRRRLNRGLRRKQHSLLKRLRKAKKEAPPMEKPEVVKTHLRDMIILPEMVGSMVGVYNGKTFNQVEIKPEMIGHYLGEFSITYKPVKHGRPGIGATHSSRFIPLK</sequence>
<comment type="function">
    <text evidence="2">Component of the small ribosomal subunit (PubMed:36517592). The ribosome is a large ribonucleoprotein complex responsible for the synthesis of proteins in the cell (PubMed:36517592).</text>
</comment>
<comment type="subunit">
    <text evidence="2">Component of the small ribosomal subunit.</text>
</comment>
<comment type="subcellular location">
    <subcellularLocation>
        <location evidence="2">Cytoplasm</location>
    </subcellularLocation>
</comment>
<comment type="similarity">
    <text evidence="3">Belongs to the universal ribosomal protein uS19 family.</text>
</comment>
<name>RS15_MOUSE</name>
<proteinExistence type="evidence at protein level"/>
<keyword id="KW-0002">3D-structure</keyword>
<keyword id="KW-0007">Acetylation</keyword>
<keyword id="KW-0963">Cytoplasm</keyword>
<keyword id="KW-1017">Isopeptide bond</keyword>
<keyword id="KW-1185">Reference proteome</keyword>
<keyword id="KW-0687">Ribonucleoprotein</keyword>
<keyword id="KW-0689">Ribosomal protein</keyword>
<keyword id="KW-0832">Ubl conjugation</keyword>